<protein>
    <recommendedName>
        <fullName evidence="1">Holliday junction branch migration complex subunit RuvA</fullName>
    </recommendedName>
</protein>
<feature type="chain" id="PRO_1000195181" description="Holliday junction branch migration complex subunit RuvA">
    <location>
        <begin position="1"/>
        <end position="204"/>
    </location>
</feature>
<feature type="region of interest" description="Domain I" evidence="1">
    <location>
        <begin position="1"/>
        <end position="67"/>
    </location>
</feature>
<feature type="region of interest" description="Domain II" evidence="1">
    <location>
        <begin position="68"/>
        <end position="149"/>
    </location>
</feature>
<feature type="region of interest" description="Flexible linker" evidence="1">
    <location>
        <begin position="150"/>
        <end position="154"/>
    </location>
</feature>
<feature type="region of interest" description="Domain III" evidence="1">
    <location>
        <begin position="155"/>
        <end position="204"/>
    </location>
</feature>
<keyword id="KW-0963">Cytoplasm</keyword>
<keyword id="KW-0227">DNA damage</keyword>
<keyword id="KW-0233">DNA recombination</keyword>
<keyword id="KW-0234">DNA repair</keyword>
<keyword id="KW-0238">DNA-binding</keyword>
<proteinExistence type="inferred from homology"/>
<reference key="1">
    <citation type="journal article" date="2008" name="Proc. Natl. Acad. Sci. U.S.A.">
        <title>Complete genome of the uncultured termite group 1 bacteria in a single host protist cell.</title>
        <authorList>
            <person name="Hongoh Y."/>
            <person name="Sharma V.K."/>
            <person name="Prakash T."/>
            <person name="Noda S."/>
            <person name="Taylor T.D."/>
            <person name="Kudo T."/>
            <person name="Sakaki Y."/>
            <person name="Toyoda A."/>
            <person name="Hattori M."/>
            <person name="Ohkuma M."/>
        </authorList>
    </citation>
    <scope>NUCLEOTIDE SEQUENCE [LARGE SCALE GENOMIC DNA]</scope>
</reference>
<gene>
    <name evidence="1" type="primary">ruvA</name>
    <name type="ordered locus">TGRD_460</name>
</gene>
<comment type="function">
    <text evidence="1">The RuvA-RuvB-RuvC complex processes Holliday junction (HJ) DNA during genetic recombination and DNA repair, while the RuvA-RuvB complex plays an important role in the rescue of blocked DNA replication forks via replication fork reversal (RFR). RuvA specifically binds to HJ cruciform DNA, conferring on it an open structure. The RuvB hexamer acts as an ATP-dependent pump, pulling dsDNA into and through the RuvAB complex. HJ branch migration allows RuvC to scan DNA until it finds its consensus sequence, where it cleaves and resolves the cruciform DNA.</text>
</comment>
<comment type="subunit">
    <text evidence="1">Homotetramer. Forms an RuvA(8)-RuvB(12)-Holliday junction (HJ) complex. HJ DNA is sandwiched between 2 RuvA tetramers; dsDNA enters through RuvA and exits via RuvB. An RuvB hexamer assembles on each DNA strand where it exits the tetramer. Each RuvB hexamer is contacted by two RuvA subunits (via domain III) on 2 adjacent RuvB subunits; this complex drives branch migration. In the full resolvosome a probable DNA-RuvA(4)-RuvB(12)-RuvC(2) complex forms which resolves the HJ.</text>
</comment>
<comment type="subcellular location">
    <subcellularLocation>
        <location evidence="1">Cytoplasm</location>
    </subcellularLocation>
</comment>
<comment type="domain">
    <text evidence="1">Has three domains with a flexible linker between the domains II and III and assumes an 'L' shape. Domain III is highly mobile and contacts RuvB.</text>
</comment>
<comment type="similarity">
    <text evidence="1">Belongs to the RuvA family.</text>
</comment>
<evidence type="ECO:0000255" key="1">
    <source>
        <dbReference type="HAMAP-Rule" id="MF_00031"/>
    </source>
</evidence>
<name>RUVA_ENDTX</name>
<sequence>MIDYLYGTLDSKSTDGITIDVNGIGYEISVPISTFLKLPETRNPIKIYIVESTAGMYGGVISLYGFFTIEEREMYLLIKDKVHGIGAKKAMEYTDKISKSFANFKTAIISKNPSMLNEIFGFTKKTADKLIVALKDKISTVNVLNKEKQTGAETIKNTMVSEAIAGLITLGYKMQQARVAVTNVYEHNENITLEDLIKKSLQYL</sequence>
<organism>
    <name type="scientific">Endomicrobium trichonymphae</name>
    <dbReference type="NCBI Taxonomy" id="1408204"/>
    <lineage>
        <taxon>Bacteria</taxon>
        <taxon>Pseudomonadati</taxon>
        <taxon>Elusimicrobiota</taxon>
        <taxon>Endomicrobiia</taxon>
        <taxon>Endomicrobiales</taxon>
        <taxon>Endomicrobiaceae</taxon>
        <taxon>Candidatus Endomicrobiellum</taxon>
    </lineage>
</organism>
<accession>B1H0B1</accession>
<dbReference type="EMBL" id="AP009510">
    <property type="protein sequence ID" value="BAG13943.1"/>
    <property type="molecule type" value="Genomic_DNA"/>
</dbReference>
<dbReference type="RefSeq" id="WP_015423469.1">
    <property type="nucleotide sequence ID" value="NC_020419.1"/>
</dbReference>
<dbReference type="SMR" id="B1H0B1"/>
<dbReference type="STRING" id="471821.TGRD_460"/>
<dbReference type="KEGG" id="rsd:TGRD_460"/>
<dbReference type="PATRIC" id="fig|471821.5.peg.747"/>
<dbReference type="HOGENOM" id="CLU_087936_0_0_0"/>
<dbReference type="Proteomes" id="UP000001691">
    <property type="component" value="Chromosome"/>
</dbReference>
<dbReference type="GO" id="GO:0005737">
    <property type="term" value="C:cytoplasm"/>
    <property type="evidence" value="ECO:0007669"/>
    <property type="project" value="UniProtKB-SubCell"/>
</dbReference>
<dbReference type="GO" id="GO:0009379">
    <property type="term" value="C:Holliday junction helicase complex"/>
    <property type="evidence" value="ECO:0007669"/>
    <property type="project" value="InterPro"/>
</dbReference>
<dbReference type="GO" id="GO:0048476">
    <property type="term" value="C:Holliday junction resolvase complex"/>
    <property type="evidence" value="ECO:0007669"/>
    <property type="project" value="UniProtKB-UniRule"/>
</dbReference>
<dbReference type="GO" id="GO:0005524">
    <property type="term" value="F:ATP binding"/>
    <property type="evidence" value="ECO:0007669"/>
    <property type="project" value="InterPro"/>
</dbReference>
<dbReference type="GO" id="GO:0000400">
    <property type="term" value="F:four-way junction DNA binding"/>
    <property type="evidence" value="ECO:0007669"/>
    <property type="project" value="UniProtKB-UniRule"/>
</dbReference>
<dbReference type="GO" id="GO:0009378">
    <property type="term" value="F:four-way junction helicase activity"/>
    <property type="evidence" value="ECO:0007669"/>
    <property type="project" value="InterPro"/>
</dbReference>
<dbReference type="GO" id="GO:0006310">
    <property type="term" value="P:DNA recombination"/>
    <property type="evidence" value="ECO:0007669"/>
    <property type="project" value="UniProtKB-UniRule"/>
</dbReference>
<dbReference type="GO" id="GO:0006281">
    <property type="term" value="P:DNA repair"/>
    <property type="evidence" value="ECO:0007669"/>
    <property type="project" value="UniProtKB-UniRule"/>
</dbReference>
<dbReference type="CDD" id="cd14332">
    <property type="entry name" value="UBA_RuvA_C"/>
    <property type="match status" value="1"/>
</dbReference>
<dbReference type="Gene3D" id="1.10.150.20">
    <property type="entry name" value="5' to 3' exonuclease, C-terminal subdomain"/>
    <property type="match status" value="1"/>
</dbReference>
<dbReference type="Gene3D" id="1.10.8.10">
    <property type="entry name" value="DNA helicase RuvA subunit, C-terminal domain"/>
    <property type="match status" value="1"/>
</dbReference>
<dbReference type="Gene3D" id="2.40.50.140">
    <property type="entry name" value="Nucleic acid-binding proteins"/>
    <property type="match status" value="1"/>
</dbReference>
<dbReference type="HAMAP" id="MF_00031">
    <property type="entry name" value="DNA_HJ_migration_RuvA"/>
    <property type="match status" value="1"/>
</dbReference>
<dbReference type="InterPro" id="IPR013849">
    <property type="entry name" value="DNA_helicase_Holl-junc_RuvA_I"/>
</dbReference>
<dbReference type="InterPro" id="IPR012340">
    <property type="entry name" value="NA-bd_OB-fold"/>
</dbReference>
<dbReference type="InterPro" id="IPR000085">
    <property type="entry name" value="RuvA"/>
</dbReference>
<dbReference type="InterPro" id="IPR010994">
    <property type="entry name" value="RuvA_2-like"/>
</dbReference>
<dbReference type="InterPro" id="IPR011114">
    <property type="entry name" value="RuvA_C"/>
</dbReference>
<dbReference type="InterPro" id="IPR036267">
    <property type="entry name" value="RuvA_C_sf"/>
</dbReference>
<dbReference type="NCBIfam" id="TIGR00084">
    <property type="entry name" value="ruvA"/>
    <property type="match status" value="1"/>
</dbReference>
<dbReference type="Pfam" id="PF14520">
    <property type="entry name" value="HHH_5"/>
    <property type="match status" value="1"/>
</dbReference>
<dbReference type="Pfam" id="PF07499">
    <property type="entry name" value="RuvA_C"/>
    <property type="match status" value="1"/>
</dbReference>
<dbReference type="Pfam" id="PF01330">
    <property type="entry name" value="RuvA_N"/>
    <property type="match status" value="1"/>
</dbReference>
<dbReference type="SUPFAM" id="SSF46929">
    <property type="entry name" value="DNA helicase RuvA subunit, C-terminal domain"/>
    <property type="match status" value="1"/>
</dbReference>
<dbReference type="SUPFAM" id="SSF50249">
    <property type="entry name" value="Nucleic acid-binding proteins"/>
    <property type="match status" value="1"/>
</dbReference>
<dbReference type="SUPFAM" id="SSF47781">
    <property type="entry name" value="RuvA domain 2-like"/>
    <property type="match status" value="1"/>
</dbReference>